<organism>
    <name type="scientific">Epichloe festucae (strain E2368)</name>
    <dbReference type="NCBI Taxonomy" id="696363"/>
    <lineage>
        <taxon>Eukaryota</taxon>
        <taxon>Fungi</taxon>
        <taxon>Dikarya</taxon>
        <taxon>Ascomycota</taxon>
        <taxon>Pezizomycotina</taxon>
        <taxon>Sordariomycetes</taxon>
        <taxon>Hypocreomycetidae</taxon>
        <taxon>Hypocreales</taxon>
        <taxon>Clavicipitaceae</taxon>
        <taxon>Epichloe</taxon>
    </lineage>
</organism>
<comment type="function">
    <text evidence="4">Nonribosomal peptide synthetase required for the biosynthetis of epichloenin A, an extracellular siderophore that plays a crucial role in endophyte-grass symbioses (PubMed:23658520). SidN assembles epichloenin A by activating and incorporating three trans-anhydromevalonylhydroxyornithine (trans-AMHO), 1 glutamine and 4 glycine moieties (PubMed:23658520). Trans-AMHO is produced from L-ornithine via 2 steps involving a L-ornithine N(5)-monooxygenase and an AHMO-N(5)-transacylase that have still to be identified (PubMed:23658520). The third adenylation domain (A3) of sidN incorporates the hydroxamate groups of the siderophore which forms an octahedral iron complex (PubMed:23658520). The other component amino acids are assembled by sidN adenylation domains A1 and A2 (PubMed:23658520).</text>
</comment>
<comment type="pathway">
    <text evidence="4">Siderophore biosynthesis.</text>
</comment>
<comment type="induction">
    <text evidence="4">Expression is repressed by iron (PubMed:23658520).</text>
</comment>
<comment type="domain">
    <text evidence="1 7">NRP synthetases are composed of discrete domains (adenylation (A), thiolation (T) or peptidyl carrier protein (PCP) and condensation (C) domains) which when grouped together are referred to as a single module (By similarity). Each module is responsible for the recognition (via the A domain) and incorporation of a single amino acid into the growing peptide product (By similarity). Thus, an NRP synthetase is generally composed of one or more modules and can terminate in a thioesterase domain (TE) that releases the newly synthesized peptide from the enzyme (By similarity). Occasionally, methyltransferase domains (responsible for amino acid methylation) are present within the NRP synthetase (By similarity). SdiN has the following architecture: A-T-C-A-T-C-A-T-C-T-C-T-C (PubMed:23658520).</text>
</comment>
<comment type="disruption phenotype">
    <text evidence="4">Leads to the accumulation of the intermediate N-5-trans-anhydromevalonyl-N-5-hydroxyornithine (trans-AMHO), displays sensitivity to oxidative stress and shows deficiencies in both polarized hyphal growth and sporulation (PubMed:23658520). Changes its interaction with the plant Lolium perenne from mutually beneficial to antagonistic (PubMed:23658520).</text>
</comment>
<comment type="similarity">
    <text evidence="6">Belongs to the NRP synthetase family.</text>
</comment>
<protein>
    <recommendedName>
        <fullName evidence="5">Nonribosomal peptide synthetase sidN</fullName>
        <shortName evidence="5">NPRS sidN</shortName>
        <ecNumber evidence="7">6.3.2.-</ecNumber>
    </recommendedName>
    <alternativeName>
        <fullName evidence="5">Epichloenin A synthetase</fullName>
    </alternativeName>
    <alternativeName>
        <fullName evidence="5">Extracellular siderophore synthetase N</fullName>
    </alternativeName>
</protein>
<keyword id="KW-0436">Ligase</keyword>
<keyword id="KW-0511">Multifunctional enzyme</keyword>
<keyword id="KW-0596">Phosphopantetheine</keyword>
<keyword id="KW-0597">Phosphoprotein</keyword>
<keyword id="KW-0677">Repeat</keyword>
<sequence length="4690" mass="516329">MDQVAVTRFPALHCFEGPKQRQSVGSNARHHTIRGNIDTQHQSQDETLRRFANFVSSLVGDDEISFDFIISPSNGGSDIAESGTAQAKKDPTQATSDYNGITLLRSTPFVESGHSEFGIIIRRQLRNNDSSLFTLEKSFVVAVDKSSYSVRICRDLVPRPLLQSISTSLCSYMGWTNPSQHSEEESNQELQLQTLNFQGQSVLNHPPLMTPPDFESQLCLPKRPQEYAKPLLHNAFLARVRENPGRIALDALSSTGRATYTYKSLDDLSSDLAEKILQIIGVDADHTDRNITVALSTSAELYIAWLGILKAGCVVSPVPTDCPSGLLQHMTGLTSSKVVLGSAETLEYFDRIIGDSSTFTFINVETIARQNYEHLLQRPPPLVNTSENDVAYILFTSGSTGKPKGVQITHHAAVCSIAANIAASPYSFESGPSSIRWFQMAAPTFDLSVLEIFVTFSIGGTICACDRTMMLTDAESVITQLEATITMTTPTLASLLRPSRIPKLREVWVCGEMLKREASELFARDRDPSVADGDTNLLNAYGPTEATITCTVDARVSLKHRGSLIGPPLPTCSNIILDSSEPPKAVPLGFAGELAIGGPQLSIGYLKSPEKTAAAFVDVEPYGKLYRTGDMARLIMGPDGTLQVEFLGRLSSDQIKILGRRVELGEIEAGLRNPLIAEVAAVALKPEVSGLPQVQLIAVVTCRTEKSDSDILAACQERAENVLQPHMRPSIYYVMDKLPRLASEKTDRKTLAKYCLSPEKSGLRRLRNGDVDGHREAGSSSIPMLQSVIEAVSSVAIVGSDKITSATTLLSLGIDSLRSVRLLQNFREIGIEGLQVTDILTCHNLGDLDTKAQQALNRSTPSLAKARNLQTLLIDFENRHKKQCLSALGFNEDNIVSFLPVTTSQAVALASFLLTADANGFQAVPGGKAFIQHTVYTVKPELNSQRIVESWTRVLSRYDIMRSVFVEVNDDLTPFAQCILSPDHEAAQIKPHFYSAKSDNECKDVIQAAQKAAEEKISLYEPPRRLSVVQSPTQTIIVFSQLHSVFDGGSETLLLEDIEREYFGQPSIERTGVLTAVERHFSENRAEAAQFWQAYMDGFLSPSFPCLRSTVPGPDENVCGGYSFMSDLSLESLTRQAAALQCSPLSILQAAWAQILFTYTGERDVAFGNTMSGRFTTELVNCSAPVLTIQSTRVNLNEENDKRNIDILLERTAQNTAALSYLHTPITGARYDTTIALQMYLNSGKGEALYERVCHPGMQNDLAVMIEVYPDRSGLLEFRLTYQTALLDDDAAYTMLANLARVTNHIMSYPNAKYMDPSVWTSLQGPGQLEQINGYHHLGQQLLHECVAEFAQKSPNAIALAFYDDLSVDHPKVQLTYADLEVKATRVAGFLMSQLPAKEGSKHVVPIFMEKCPELYITLLGILKAGAAWCPVDPSYPPARQIFLIEKTTAGICFTSKSTTSQLSSILPASFKSISVSDLLEGGSCSTSRTLKASESARLDNLSIQRSDIAYVIFTSGTTGTPKGVPISHESASLSIDSYIQRVNVDLDLRGCEVRFLQFANYTFDAFVCDVFTAWRLGGTLVSATRDILLGSFIALANKVGATHTSMTPTFASTLQPQDFETLRVATMGGEVLPQILADKWKSRMSLCNVYGPAETAINTTINRLSAASRSGNIGTALPAVNAYVMASGYPVMKHMLGELVISGPQLSPGYWDNVHSSNNRFRWNSTLQCRVYHTGDYVRQLADGSFDFVGRKDDLVKIRGMRVELTEISTVCSAGHESVVHSEVLLAKLPGSTQSSLICFVDCGLQKSSDVDNFCILKNEEAQLVAQAVKRHATAELPRHMVPDVFMPLNCLPRNQSSKVNRKRLLEVIGREWSMQPMSPVADEQVDPAWCIKHRPLLEKIQGVIKIMPTTLSRSTTLSELGVDSIGAIRLSSRLKNDGHDISAIQVLDSVTIEDLINHLSVKRQGTSNWKTLLSRYLDHWKPLVSRHLARDPAHFSLVPTTVFQDGMLVETLRDPMLYWASYSWRLPSTVDIARVRQAWQHVSKNHDILKVSFVPTAYFEQEETQSSGPSSMFIQLIDYNASMGWQEIVSDSGDWQQSIHALCANLQRTQHENNFSSPPWRVTILAQQDQRIMNLTIHHSLCDGEMLRSLMHDVAWAYSTAELPVKRCQVQEAVSRLAVRYSEPEGHKFWGDMLSPLVSQTSLGDATSNSPKAVVRKIRHRTTELQATRSTSKLTGLARRLGASSLSPLFRVTFGIMLTEYYEQQSVLFGEVRSERLLESQLVGAMAPLSATYPVPFRSSGNLKDMVHSQQILVMDSIRYGPPQPSDVRKILKKSRDEALYSAVYVLRQRSEDDGGSLAPWEEFKDIFEIFVDHEFALNVLEGADDTVTISLSVDETLMSSSAQAIFLQQLDALLIAFDKSAPEISLSGLNAHFPLDLLSIASSKVSAQYTSTVPPSHYIETWAKTHPEWKAVEVATGFLGSQKIVTEDWTYKKLNETANQVANLIIHASLHGRAIAVSLDRSLIAFAIIVGIMKSGNTYVPIEAGLPNDRKSFLLRDSRAAMAFVCDNNFDGVELPPETKVLDTKNQSFIENLSTQDTSDILNNYPENLDAYLLYTSGSTGAPKGVRVSRHNLSSFSDAWGKLIGNVAPKSLELGGVGKFLCLASRAFDVHIGEMFLAWRFGLCAVTGERLSMLDDLPRTFRELGVTHAGIVPSLLDQTGLVPEDAPHLVYLGVGGEKMTPRTQQIWSSSDRVALVNVYGPTEVTIGCSAGRILPDSDTRCIGHPLGDSVAHVLAPGSNEHVKKGMAGELVIEGSLVANGYLNRPDAKGFCDINGRKMYRTGDIVRMDADSSILFLGRKDEQVKVRGQRLELGEVSEVIRSLSPTDIDVVTLLLNHPGTSKQFLVSFVASSGAAVRGELRWINENYKEINNSLRQACEQTLPAYMVPDFIIPISFIPLRDTSAKTDAKALEHMFHTLSLGELFGESSSLVNKPTTAPSRDLTSIEKQILTVVKSVVGQDDKRDARPGSTLFQLGLDSIASVKLSFKLKKLGFSTTVARLLQNPTIEELGRMKNALKGSHHAEPSNSESITTRFEELEKETMNSLKDRETTHIESIRPCMPLQEVLVAHTMSHGSEADNAYVSHMIFELDPAVVVEHVKAAWAAVVKNTELLRTCFIDRENDIVQLVIKENHATPVWKHLSNGTNMLKEELLSCKKEIADDIVTNIDKSPPVRFTLASCDGADETNEMSLFMLSIHHALYDMVSIEMIFQDFEVAYTDSSLSRRPSTLPLLEHIAAQQQNESKAKSYWTTLFDGYDHRIEKISPRTAQTTARTLNASLTTLESLCSQTNMTLSALIQGVFAYVLARTLKRPDLIFGVVLSGRSIDVEGIDAMAAPCISTIPQRLNIGTDGETIAELITTVQDRLFKSMEYQYTSLRSLSRWLEISGPLFSSLFSFTKLSPPEDSGSSKSRILKPTEGEMFLDFELALECEADPGTDTVTLRTRSTMFDKMEELDALLEQMESLVTSFTRGENKAVDGDFGSMLHTRLLPPHGSLQEESDDWSVLEQQIRDVVVAFSGASPNEVKRTTPFIKYGIDSITTIRFSTLLRKNGFWVSGADVLRNPSVAKLATHIQTTSSFNGTAKDSDDEASESAGIGNWSKALLAGAVSTKVLDDVVAVYPLTPLQAGMISATVMMDPTLYAHHHPFRLPQGTSIDQVRSAWSRLVAKHDILRTSFHEINQPRPQLVGAVHQESILNWHEVATEDVQVAIDDLIKRTQFPSVSSFETPPVKATVIRSPEDMLLVVSLHHATYDGTSIRFIFEDLWAILRGNRVPERNPFYETAMKIHNMSSGSVGFWADSLSGYGGAAAIAEAEDIQNKMTSKTMLLAQDTSALEQWCTEKGITIQTICQLAVSKAVCAQTKSRDVVLGQVHAARLDINGADKVAGPMLNTVPLRLCIHDDSFTNHDYLRDLQAFQNKSLDHLHASLSDIQRLWRKENGRDGQLFEVLFIFRKGEDATEAPFWQPFEPEGSKESLPPSHYDLVIEVHQKSRGGLELEVHSRFADDTTSNLMSLLVESFESIRKHPDELAISSPGVLSKVPKPGLTRETGAVPTSPFDQSAIDQFLDPLRKVLSETTDTPVSSIDAQTSIFSIGVDSIVAIRVAGACRKAHIPLHTMEIMRNAKIGKLCEVAFAKSGQAAPNRSTTESNGVAPLLDQEVKKAAASKLGRAEAEIQEILPVLPGQEYHLACWLTSGKTLLEPVWVFKAENGLDAGRLRDTWISLVQKNDSLRTCFAQVKPTLAVQAILKPDCVDAAKSFTVQQVPENMTMEEYVKSEIHHLSLSPSSLYEPPVRIVLIQGGREGVSVLLRLHHALYDAWSMGILIDELSSLYCGTMQKPCPPLSVSHFAQFTQQKLRGKNEEQFWTETLGQCDPTILTPKADINTDSKSCNRAFVSFECVDVSMGALKSAARAFGITPQCLIQVAFGRMLSDVTESSSPVFGYYTAGRSAELEGIEALASPTLNMLPVAVPKDLVASQLAGTSLSILLQSFQDRTNSQSDYEQSRLRDVIKWAPNKGVSPLFNAHLNILWNDEILLKPQVSKDTLLRPWPLGVPSDYASPTPLSRGSSVDGLDTSFLPTNVLFADVGPSRETANLAIGIGCDPTLRDAQGLEEIARMFSGHLSRLVGSRDLV</sequence>
<name>SIDN_EPIFE</name>
<evidence type="ECO:0000250" key="1">
    <source>
        <dbReference type="UniProtKB" id="A0A144KPJ6"/>
    </source>
</evidence>
<evidence type="ECO:0000255" key="2"/>
<evidence type="ECO:0000255" key="3">
    <source>
        <dbReference type="PROSITE-ProRule" id="PRU00258"/>
    </source>
</evidence>
<evidence type="ECO:0000269" key="4">
    <source>
    </source>
</evidence>
<evidence type="ECO:0000303" key="5">
    <source>
    </source>
</evidence>
<evidence type="ECO:0000305" key="6"/>
<evidence type="ECO:0000305" key="7">
    <source>
    </source>
</evidence>
<accession>K7NCX6</accession>
<dbReference type="EC" id="6.3.2.-" evidence="7"/>
<dbReference type="EMBL" id="JN132403">
    <property type="protein sequence ID" value="AET13875.1"/>
    <property type="molecule type" value="Genomic_DNA"/>
</dbReference>
<dbReference type="SMR" id="K7NCX6"/>
<dbReference type="GO" id="GO:0005737">
    <property type="term" value="C:cytoplasm"/>
    <property type="evidence" value="ECO:0007669"/>
    <property type="project" value="TreeGrafter"/>
</dbReference>
<dbReference type="GO" id="GO:0016874">
    <property type="term" value="F:ligase activity"/>
    <property type="evidence" value="ECO:0007669"/>
    <property type="project" value="UniProtKB-KW"/>
</dbReference>
<dbReference type="GO" id="GO:0031177">
    <property type="term" value="F:phosphopantetheine binding"/>
    <property type="evidence" value="ECO:0007669"/>
    <property type="project" value="InterPro"/>
</dbReference>
<dbReference type="GO" id="GO:0043041">
    <property type="term" value="P:amino acid activation for nonribosomal peptide biosynthetic process"/>
    <property type="evidence" value="ECO:0007669"/>
    <property type="project" value="TreeGrafter"/>
</dbReference>
<dbReference type="GO" id="GO:0044550">
    <property type="term" value="P:secondary metabolite biosynthetic process"/>
    <property type="evidence" value="ECO:0007669"/>
    <property type="project" value="TreeGrafter"/>
</dbReference>
<dbReference type="CDD" id="cd05918">
    <property type="entry name" value="A_NRPS_SidN3_like"/>
    <property type="match status" value="2"/>
</dbReference>
<dbReference type="FunFam" id="3.30.300.30:FF:000015">
    <property type="entry name" value="Nonribosomal peptide synthase SidD"/>
    <property type="match status" value="1"/>
</dbReference>
<dbReference type="FunFam" id="3.30.300.30:FF:000033">
    <property type="entry name" value="Nonribosomal siderophore peptide synthase SidC"/>
    <property type="match status" value="1"/>
</dbReference>
<dbReference type="FunFam" id="3.40.50.12780:FF:000024">
    <property type="entry name" value="Nonribosomal siderophore peptide synthase SidC"/>
    <property type="match status" value="2"/>
</dbReference>
<dbReference type="Gene3D" id="3.30.300.30">
    <property type="match status" value="3"/>
</dbReference>
<dbReference type="Gene3D" id="1.10.1200.10">
    <property type="entry name" value="ACP-like"/>
    <property type="match status" value="3"/>
</dbReference>
<dbReference type="Gene3D" id="3.30.559.10">
    <property type="entry name" value="Chloramphenicol acetyltransferase-like domain"/>
    <property type="match status" value="5"/>
</dbReference>
<dbReference type="Gene3D" id="3.40.50.12780">
    <property type="entry name" value="N-terminal domain of ligase-like"/>
    <property type="match status" value="3"/>
</dbReference>
<dbReference type="Gene3D" id="3.30.559.30">
    <property type="entry name" value="Nonribosomal peptide synthetase, condensation domain"/>
    <property type="match status" value="5"/>
</dbReference>
<dbReference type="InterPro" id="IPR036736">
    <property type="entry name" value="ACP-like_sf"/>
</dbReference>
<dbReference type="InterPro" id="IPR045851">
    <property type="entry name" value="AMP-bd_C_sf"/>
</dbReference>
<dbReference type="InterPro" id="IPR020845">
    <property type="entry name" value="AMP-binding_CS"/>
</dbReference>
<dbReference type="InterPro" id="IPR000873">
    <property type="entry name" value="AMP-dep_synth/lig_dom"/>
</dbReference>
<dbReference type="InterPro" id="IPR042099">
    <property type="entry name" value="ANL_N_sf"/>
</dbReference>
<dbReference type="InterPro" id="IPR023213">
    <property type="entry name" value="CAT-like_dom_sf"/>
</dbReference>
<dbReference type="InterPro" id="IPR001242">
    <property type="entry name" value="Condensatn"/>
</dbReference>
<dbReference type="InterPro" id="IPR020806">
    <property type="entry name" value="PKS_PP-bd"/>
</dbReference>
<dbReference type="InterPro" id="IPR009081">
    <property type="entry name" value="PP-bd_ACP"/>
</dbReference>
<dbReference type="InterPro" id="IPR006162">
    <property type="entry name" value="Ppantetheine_attach_site"/>
</dbReference>
<dbReference type="NCBIfam" id="NF003417">
    <property type="entry name" value="PRK04813.1"/>
    <property type="match status" value="3"/>
</dbReference>
<dbReference type="PANTHER" id="PTHR45527:SF1">
    <property type="entry name" value="FATTY ACID SYNTHASE"/>
    <property type="match status" value="1"/>
</dbReference>
<dbReference type="PANTHER" id="PTHR45527">
    <property type="entry name" value="NONRIBOSOMAL PEPTIDE SYNTHETASE"/>
    <property type="match status" value="1"/>
</dbReference>
<dbReference type="Pfam" id="PF00501">
    <property type="entry name" value="AMP-binding"/>
    <property type="match status" value="3"/>
</dbReference>
<dbReference type="Pfam" id="PF00668">
    <property type="entry name" value="Condensation"/>
    <property type="match status" value="5"/>
</dbReference>
<dbReference type="Pfam" id="PF00550">
    <property type="entry name" value="PP-binding"/>
    <property type="match status" value="4"/>
</dbReference>
<dbReference type="SMART" id="SM00823">
    <property type="entry name" value="PKS_PP"/>
    <property type="match status" value="4"/>
</dbReference>
<dbReference type="SUPFAM" id="SSF56801">
    <property type="entry name" value="Acetyl-CoA synthetase-like"/>
    <property type="match status" value="3"/>
</dbReference>
<dbReference type="SUPFAM" id="SSF47336">
    <property type="entry name" value="ACP-like"/>
    <property type="match status" value="4"/>
</dbReference>
<dbReference type="SUPFAM" id="SSF52777">
    <property type="entry name" value="CoA-dependent acyltransferases"/>
    <property type="match status" value="10"/>
</dbReference>
<dbReference type="PROSITE" id="PS00455">
    <property type="entry name" value="AMP_BINDING"/>
    <property type="match status" value="3"/>
</dbReference>
<dbReference type="PROSITE" id="PS50075">
    <property type="entry name" value="CARRIER"/>
    <property type="match status" value="5"/>
</dbReference>
<dbReference type="PROSITE" id="PS00012">
    <property type="entry name" value="PHOSPHOPANTETHEINE"/>
    <property type="match status" value="3"/>
</dbReference>
<feature type="chain" id="PRO_0000444381" description="Nonribosomal peptide synthetase sidN">
    <location>
        <begin position="1"/>
        <end position="4690"/>
    </location>
</feature>
<feature type="domain" description="Carrier 1" evidence="3 7">
    <location>
        <begin position="779"/>
        <end position="856"/>
    </location>
</feature>
<feature type="domain" description="Carrier 2" evidence="3 7">
    <location>
        <begin position="1889"/>
        <end position="1965"/>
    </location>
</feature>
<feature type="domain" description="Carrier 3" evidence="3 7">
    <location>
        <begin position="3002"/>
        <end position="3079"/>
    </location>
</feature>
<feature type="domain" description="Carrier 4" evidence="3 7">
    <location>
        <begin position="3564"/>
        <end position="3637"/>
    </location>
</feature>
<feature type="domain" description="Carrier 5" evidence="3 7">
    <location>
        <begin position="4119"/>
        <end position="4195"/>
    </location>
</feature>
<feature type="region of interest" description="Adenylation 1" evidence="2 7">
    <location>
        <begin position="238"/>
        <end position="656"/>
    </location>
</feature>
<feature type="region of interest" description="Condensation 1" evidence="2 7">
    <location>
        <begin position="925"/>
        <end position="1175"/>
    </location>
</feature>
<feature type="region of interest" description="Adenylation 2" evidence="2 7">
    <location>
        <begin position="1349"/>
        <end position="1760"/>
    </location>
</feature>
<feature type="region of interest" description="Condensation 2" evidence="2 7">
    <location>
        <begin position="2001"/>
        <end position="2285"/>
    </location>
</feature>
<feature type="region of interest" description="Adenylation 3" evidence="2 7">
    <location>
        <begin position="2464"/>
        <end position="2869"/>
    </location>
</feature>
<feature type="region of interest" description="Condensation 3" evidence="2 7">
    <location>
        <begin position="3121"/>
        <end position="3530"/>
    </location>
</feature>
<feature type="region of interest" description="Condensation 4" evidence="2 7">
    <location>
        <begin position="3679"/>
        <end position="4087"/>
    </location>
</feature>
<feature type="region of interest" description="Condensation 5" evidence="2 7">
    <location>
        <begin position="4262"/>
        <end position="4589"/>
    </location>
</feature>
<feature type="modified residue" description="O-(pantetheine 4'-phosphoryl)serine" evidence="3">
    <location>
        <position position="816"/>
    </location>
</feature>
<feature type="modified residue" description="O-(pantetheine 4'-phosphoryl)serine" evidence="3">
    <location>
        <position position="1926"/>
    </location>
</feature>
<feature type="modified residue" description="O-(pantetheine 4'-phosphoryl)serine" evidence="3">
    <location>
        <position position="3040"/>
    </location>
</feature>
<feature type="modified residue" description="O-(pantetheine 4'-phosphoryl)serine" evidence="3">
    <location>
        <position position="3598"/>
    </location>
</feature>
<feature type="modified residue" description="O-(pantetheine 4'-phosphoryl)serine" evidence="3">
    <location>
        <position position="4156"/>
    </location>
</feature>
<proteinExistence type="evidence at transcript level"/>
<gene>
    <name evidence="5" type="primary">sidN</name>
</gene>
<reference key="1">
    <citation type="journal article" date="2013" name="PLoS Pathog.">
        <title>An extracellular siderophore is required to maintain the mutualistic interaction of Epichloe festucae with Lolium perenne.</title>
        <authorList>
            <person name="Johnson L.J."/>
            <person name="Koulman A."/>
            <person name="Christensen M."/>
            <person name="Lane G.A."/>
            <person name="Fraser K."/>
            <person name="Forester N."/>
            <person name="Johnson R.D."/>
            <person name="Bryan G.T."/>
            <person name="Rasmussen S."/>
        </authorList>
    </citation>
    <scope>NUCLEOTIDE SEQUENCE [GENOMIC DNA]</scope>
    <scope>FUNCTION</scope>
    <scope>DISRUPTION PHENOTYPE</scope>
    <scope>DOMAIN</scope>
    <scope>INDUCTION</scope>
    <scope>PATHWAY</scope>
    <source>
        <strain>E2368</strain>
    </source>
</reference>